<dbReference type="EC" id="5.6.2.-" evidence="1"/>
<dbReference type="EMBL" id="U66557">
    <property type="protein sequence ID" value="AAB49283.1"/>
    <property type="molecule type" value="Genomic_DNA"/>
</dbReference>
<dbReference type="EMBL" id="AE009950">
    <property type="protein sequence ID" value="AAL80619.1"/>
    <property type="molecule type" value="Genomic_DNA"/>
</dbReference>
<dbReference type="RefSeq" id="WP_011011612.1">
    <property type="nucleotide sequence ID" value="NZ_CP023154.1"/>
</dbReference>
<dbReference type="SMR" id="P95479"/>
<dbReference type="IntAct" id="P95479">
    <property type="interactions" value="1"/>
</dbReference>
<dbReference type="STRING" id="186497.PF0495"/>
<dbReference type="PaxDb" id="186497-PF0495"/>
<dbReference type="GeneID" id="41712297"/>
<dbReference type="KEGG" id="pfu:PF0495"/>
<dbReference type="PATRIC" id="fig|186497.12.peg.518"/>
<dbReference type="eggNOG" id="arCOG01526">
    <property type="taxonomic scope" value="Archaea"/>
</dbReference>
<dbReference type="HOGENOM" id="CLU_002886_0_0_2"/>
<dbReference type="OrthoDB" id="30963at2157"/>
<dbReference type="PhylomeDB" id="P95479"/>
<dbReference type="BRENDA" id="3.6.4.12">
    <property type="organism ID" value="5243"/>
</dbReference>
<dbReference type="BRENDA" id="5.6.2.2">
    <property type="organism ID" value="5243"/>
</dbReference>
<dbReference type="Proteomes" id="UP000001013">
    <property type="component" value="Chromosome"/>
</dbReference>
<dbReference type="GO" id="GO:0005737">
    <property type="term" value="C:cytoplasm"/>
    <property type="evidence" value="ECO:0007669"/>
    <property type="project" value="UniProtKB-SubCell"/>
</dbReference>
<dbReference type="GO" id="GO:0005524">
    <property type="term" value="F:ATP binding"/>
    <property type="evidence" value="ECO:0007669"/>
    <property type="project" value="UniProtKB-UniRule"/>
</dbReference>
<dbReference type="GO" id="GO:0016887">
    <property type="term" value="F:ATP hydrolysis activity"/>
    <property type="evidence" value="ECO:0007669"/>
    <property type="project" value="RHEA"/>
</dbReference>
<dbReference type="GO" id="GO:0003677">
    <property type="term" value="F:DNA binding"/>
    <property type="evidence" value="ECO:0007669"/>
    <property type="project" value="UniProtKB-UniRule"/>
</dbReference>
<dbReference type="GO" id="GO:0003918">
    <property type="term" value="F:DNA topoisomerase type II (double strand cut, ATP-hydrolyzing) activity"/>
    <property type="evidence" value="ECO:0007669"/>
    <property type="project" value="UniProtKB-EC"/>
</dbReference>
<dbReference type="GO" id="GO:0160097">
    <property type="term" value="F:reverse gyrase activity"/>
    <property type="evidence" value="ECO:0007669"/>
    <property type="project" value="UniProtKB-UniRule"/>
</dbReference>
<dbReference type="GO" id="GO:0008270">
    <property type="term" value="F:zinc ion binding"/>
    <property type="evidence" value="ECO:0007669"/>
    <property type="project" value="UniProtKB-UniRule"/>
</dbReference>
<dbReference type="GO" id="GO:0006265">
    <property type="term" value="P:DNA topological change"/>
    <property type="evidence" value="ECO:0007669"/>
    <property type="project" value="UniProtKB-UniRule"/>
</dbReference>
<dbReference type="CDD" id="cd17924">
    <property type="entry name" value="DDXDc_reverse_gyrase"/>
    <property type="match status" value="1"/>
</dbReference>
<dbReference type="CDD" id="cd18798">
    <property type="entry name" value="SF2_C_reverse_gyrase"/>
    <property type="match status" value="1"/>
</dbReference>
<dbReference type="CDD" id="cd00186">
    <property type="entry name" value="TOP1Ac"/>
    <property type="match status" value="1"/>
</dbReference>
<dbReference type="CDD" id="cd03361">
    <property type="entry name" value="TOPRIM_TopoIA_RevGyr"/>
    <property type="match status" value="1"/>
</dbReference>
<dbReference type="Gene3D" id="2.60.510.20">
    <property type="match status" value="1"/>
</dbReference>
<dbReference type="Gene3D" id="3.40.50.140">
    <property type="match status" value="1"/>
</dbReference>
<dbReference type="Gene3D" id="3.40.50.300">
    <property type="entry name" value="P-loop containing nucleotide triphosphate hydrolases"/>
    <property type="match status" value="3"/>
</dbReference>
<dbReference type="Gene3D" id="1.10.460.10">
    <property type="entry name" value="Topoisomerase I, domain 2"/>
    <property type="match status" value="1"/>
</dbReference>
<dbReference type="Gene3D" id="1.10.290.10">
    <property type="entry name" value="Topoisomerase I, domain 4"/>
    <property type="match status" value="1"/>
</dbReference>
<dbReference type="HAMAP" id="MF_01125">
    <property type="entry name" value="Reverse_gyrase"/>
    <property type="match status" value="1"/>
</dbReference>
<dbReference type="InterPro" id="IPR011545">
    <property type="entry name" value="DEAD/DEAH_box_helicase_dom"/>
</dbReference>
<dbReference type="InterPro" id="IPR014001">
    <property type="entry name" value="Helicase_ATP-bd"/>
</dbReference>
<dbReference type="InterPro" id="IPR027417">
    <property type="entry name" value="P-loop_NTPase"/>
</dbReference>
<dbReference type="InterPro" id="IPR005736">
    <property type="entry name" value="Reverse_gyrase"/>
</dbReference>
<dbReference type="InterPro" id="IPR003601">
    <property type="entry name" value="Topo_IA_2"/>
</dbReference>
<dbReference type="InterPro" id="IPR013497">
    <property type="entry name" value="Topo_IA_cen"/>
</dbReference>
<dbReference type="InterPro" id="IPR013824">
    <property type="entry name" value="Topo_IA_cen_sub1"/>
</dbReference>
<dbReference type="InterPro" id="IPR013826">
    <property type="entry name" value="Topo_IA_cen_sub3"/>
</dbReference>
<dbReference type="InterPro" id="IPR023405">
    <property type="entry name" value="Topo_IA_core_domain"/>
</dbReference>
<dbReference type="InterPro" id="IPR003602">
    <property type="entry name" value="Topo_IA_DNA-bd_dom"/>
</dbReference>
<dbReference type="InterPro" id="IPR006171">
    <property type="entry name" value="TOPRIM_dom"/>
</dbReference>
<dbReference type="InterPro" id="IPR034142">
    <property type="entry name" value="TOPRIM_RevGyr"/>
</dbReference>
<dbReference type="InterPro" id="IPR040569">
    <property type="entry name" value="Znf_Rg"/>
</dbReference>
<dbReference type="NCBIfam" id="TIGR01054">
    <property type="entry name" value="rgy"/>
    <property type="match status" value="1"/>
</dbReference>
<dbReference type="PANTHER" id="PTHR43505">
    <property type="entry name" value="REVERSE GYRASE"/>
    <property type="match status" value="1"/>
</dbReference>
<dbReference type="PANTHER" id="PTHR43505:SF1">
    <property type="entry name" value="REVERSE GYRASE"/>
    <property type="match status" value="1"/>
</dbReference>
<dbReference type="Pfam" id="PF00270">
    <property type="entry name" value="DEAD"/>
    <property type="match status" value="1"/>
</dbReference>
<dbReference type="Pfam" id="PF01131">
    <property type="entry name" value="Topoisom_bac"/>
    <property type="match status" value="1"/>
</dbReference>
<dbReference type="Pfam" id="PF01751">
    <property type="entry name" value="Toprim"/>
    <property type="match status" value="1"/>
</dbReference>
<dbReference type="Pfam" id="PF17915">
    <property type="entry name" value="zf_Rg"/>
    <property type="match status" value="1"/>
</dbReference>
<dbReference type="PRINTS" id="PR00417">
    <property type="entry name" value="PRTPISMRASEI"/>
</dbReference>
<dbReference type="SMART" id="SM00487">
    <property type="entry name" value="DEXDc"/>
    <property type="match status" value="1"/>
</dbReference>
<dbReference type="SMART" id="SM00437">
    <property type="entry name" value="TOP1Ac"/>
    <property type="match status" value="1"/>
</dbReference>
<dbReference type="SMART" id="SM00436">
    <property type="entry name" value="TOP1Bc"/>
    <property type="match status" value="1"/>
</dbReference>
<dbReference type="SMART" id="SM00493">
    <property type="entry name" value="TOPRIM"/>
    <property type="match status" value="1"/>
</dbReference>
<dbReference type="SUPFAM" id="SSF52540">
    <property type="entry name" value="P-loop containing nucleoside triphosphate hydrolases"/>
    <property type="match status" value="2"/>
</dbReference>
<dbReference type="SUPFAM" id="SSF56712">
    <property type="entry name" value="Prokaryotic type I DNA topoisomerase"/>
    <property type="match status" value="1"/>
</dbReference>
<dbReference type="PROSITE" id="PS51192">
    <property type="entry name" value="HELICASE_ATP_BIND_1"/>
    <property type="match status" value="1"/>
</dbReference>
<dbReference type="PROSITE" id="PS52039">
    <property type="entry name" value="TOPO_IA_2"/>
    <property type="match status" value="1"/>
</dbReference>
<dbReference type="PROSITE" id="PS50880">
    <property type="entry name" value="TOPRIM"/>
    <property type="match status" value="1"/>
</dbReference>
<dbReference type="PROSITE" id="PS52037">
    <property type="entry name" value="ZF_RG_C"/>
    <property type="match status" value="1"/>
</dbReference>
<dbReference type="PROSITE" id="PS52036">
    <property type="entry name" value="ZF_RG_N"/>
    <property type="match status" value="1"/>
</dbReference>
<name>RGYR_PYRFU</name>
<evidence type="ECO:0000255" key="1">
    <source>
        <dbReference type="HAMAP-Rule" id="MF_01125"/>
    </source>
</evidence>
<evidence type="ECO:0000255" key="2">
    <source>
        <dbReference type="PROSITE-ProRule" id="PRU01380"/>
    </source>
</evidence>
<evidence type="ECO:0000255" key="3">
    <source>
        <dbReference type="PROSITE-ProRule" id="PRU01381"/>
    </source>
</evidence>
<evidence type="ECO:0000255" key="4">
    <source>
        <dbReference type="PROSITE-ProRule" id="PRU01383"/>
    </source>
</evidence>
<evidence type="ECO:0000269" key="5">
    <source>
    </source>
</evidence>
<evidence type="ECO:0000303" key="6">
    <source>
    </source>
</evidence>
<evidence type="ECO:0000305" key="7"/>
<evidence type="ECO:0000305" key="8">
    <source>
    </source>
</evidence>
<gene>
    <name evidence="1 6" type="primary">rgy</name>
    <name type="ordered locus">PF0495</name>
</gene>
<sequence>MKAIYRDMCPNCRGAITDERLAAKNPCDACLDEPISMDDYFQLVTAIRKALKLKGVLKEWEEIYALNKEVKEIEELFKKATGFTFWSAQRSWVKRIIKGKSFSIIAPTGMGKSTFGAFMSIYFALKGKKSYIVVPTTPLVVQTVKKIKAMMEKAEVKVNLVYYHGNLKKKEKDEALEKIKSGNFDILVTSSQFLATRFDELLKDKRIDFMFVDDVDAFLKASKNIDRSLMMLGFNEEIIKKAWEIIKLKKQLAKLLQNESGNEEVEKLNREIERLEREIERYKKENKIGILIVASATGSARGDRIKLYRELLGFEVGSGRSVLRNIVDTYIIPEKSMEEHVEELLKTLGRGGLIFVPIDKGIEYAEQLTNYLKSKGFKVELVSARDKKGLELFEKEEVDYLVGVATYYGTIVRGLDLPHLVRFAIFTGVPKFRFSLDLEQPTIYRVLGLMSEILEFLPEEKRTEGEKLYARLRRLIRNIPQYELMKIEEALAEGLELEGFYNHVLEVFKQAVEFLREALKDEEVLKKIAENPFLSLKQIEGKWYIEIPDVRTYIQASGRTSRLFAGGITKGLSVILVDDQKVFNGLIRQMRWRFVEFEIKPLGEINIEEVLKEIDRDREKVRLVLEGKISEQVKDLVKSALMIVESPNKARTIANFFGQPSKRRIGDLVAYEVSIGDKMLTILASGGHMFDLVTTEGYHGVLLLEKGGKRYFVPVYDTIKRCRDCGHQFVDWEEKGVCPRCGSRNVYDALENVKAMRDLAQEVDEILIGTDPDTEGEKIAWDIRNVLSPYAPVIKRIEFHEVTRPAILRAINEARDINEDRVNAQLVRRIEDRWIGFELSQKLWEVFENYNLSAGRVQTPVLGWIVQRYKEFTESETDFLGLTLENDITIILEGVSGDVQEVYVKEVTIEEREINPLPPYTTDAMLQDASRFLGFSATHTMQLAQDLFELGLTTYHRTDSIHVSNTGIEIAKEYITQEIGEEYFAPRKWGEEGAHEAIRPTRPIDTGRLIQLIRDGIITLPRNLTKDHFKLYDLIFRRFMASQMKPAKVLYERAVIGTPYGEVEIEGYIDVIYDGWSRIKPLPLKKLPRLEKDQILKVTEIRKWRAPKVSLYTQGDVIALMKERGIGRPSTYAKIVQTLLQRGYVIETKSKKKLVPTEKGIKVYHYLVSKYKDLVSEERTRQLEKLMDMVEEAKANYQEVLNELYEEILRYVKS</sequence>
<reference key="1">
    <citation type="journal article" date="1997" name="J. Bacteriol.">
        <title>Characterization of the reverse gyrase from the hyperthermophilic archaeon Pyrococcus furiosus.</title>
        <authorList>
            <person name="Borges K.M."/>
            <person name="Bergerat A."/>
            <person name="Bogert A.M."/>
            <person name="DiRuggiero J."/>
            <person name="Forterre P."/>
            <person name="Robb F.T."/>
        </authorList>
    </citation>
    <scope>NUCLEOTIDE SEQUENCE [GENOMIC DNA]</scope>
    <scope>FUNCTION</scope>
    <scope>ACTIVE SITE</scope>
    <scope>SUBUNIT</scope>
    <source>
        <strain>ATCC 43587 / DSM 3638 / JCM 8422 / Vc1</strain>
    </source>
</reference>
<reference key="2">
    <citation type="journal article" date="1999" name="Genetics">
        <title>Divergence of the hyperthermophilic archaea Pyrococcus furiosus and P. horikoshii inferred from complete genomic sequences.</title>
        <authorList>
            <person name="Maeder D.L."/>
            <person name="Weiss R.B."/>
            <person name="Dunn D.M."/>
            <person name="Cherry J.L."/>
            <person name="Gonzalez J.M."/>
            <person name="DiRuggiero J."/>
            <person name="Robb F.T."/>
        </authorList>
    </citation>
    <scope>NUCLEOTIDE SEQUENCE [LARGE SCALE GENOMIC DNA]</scope>
    <source>
        <strain>ATCC 43587 / DSM 3638 / JCM 8422 / Vc1</strain>
    </source>
</reference>
<feature type="chain" id="PRO_0000158089" description="Reverse gyrase">
    <location>
        <begin position="1"/>
        <end position="1214"/>
    </location>
</feature>
<feature type="domain" description="Helicase ATP-binding" evidence="1">
    <location>
        <begin position="93"/>
        <end position="252"/>
    </location>
</feature>
<feature type="domain" description="Toprim" evidence="1">
    <location>
        <begin position="639"/>
        <end position="802"/>
    </location>
</feature>
<feature type="domain" description="Topo IA-type catalytic" evidence="4">
    <location>
        <begin position="818"/>
        <end position="1212"/>
    </location>
</feature>
<feature type="zinc finger region" description="RG N-terminal-type" evidence="2">
    <location>
        <begin position="1"/>
        <end position="37"/>
    </location>
</feature>
<feature type="zinc finger region" description="RG C-terminal-type" evidence="3">
    <location>
        <begin position="719"/>
        <end position="748"/>
    </location>
</feature>
<feature type="region of interest" description="Topoisomerase I" evidence="1">
    <location>
        <begin position="635"/>
        <end position="1214"/>
    </location>
</feature>
<feature type="short sequence motif" description="DEAD box" evidence="1">
    <location>
        <begin position="213"/>
        <end position="216"/>
    </location>
</feature>
<feature type="active site" description="O-(5'-phospho-DNA)-tyrosine intermediate" evidence="4 8">
    <location>
        <position position="955"/>
    </location>
</feature>
<feature type="binding site" evidence="1">
    <location>
        <position position="9"/>
    </location>
    <ligand>
        <name>Zn(2+)</name>
        <dbReference type="ChEBI" id="CHEBI:29105"/>
        <label>1</label>
    </ligand>
</feature>
<feature type="binding site" evidence="1">
    <location>
        <position position="12"/>
    </location>
    <ligand>
        <name>Zn(2+)</name>
        <dbReference type="ChEBI" id="CHEBI:29105"/>
        <label>1</label>
    </ligand>
</feature>
<feature type="binding site" evidence="1">
    <location>
        <position position="27"/>
    </location>
    <ligand>
        <name>Zn(2+)</name>
        <dbReference type="ChEBI" id="CHEBI:29105"/>
        <label>1</label>
    </ligand>
</feature>
<feature type="binding site" evidence="1">
    <location>
        <position position="30"/>
    </location>
    <ligand>
        <name>Zn(2+)</name>
        <dbReference type="ChEBI" id="CHEBI:29105"/>
        <label>1</label>
    </ligand>
</feature>
<feature type="binding site" evidence="1">
    <location>
        <position position="89"/>
    </location>
    <ligand>
        <name>ATP</name>
        <dbReference type="ChEBI" id="CHEBI:30616"/>
    </ligand>
</feature>
<feature type="binding site" evidence="1">
    <location>
        <begin position="106"/>
        <end position="113"/>
    </location>
    <ligand>
        <name>ATP</name>
        <dbReference type="ChEBI" id="CHEBI:30616"/>
    </ligand>
</feature>
<feature type="binding site" evidence="1">
    <location>
        <position position="645"/>
    </location>
    <ligand>
        <name>Mg(2+)</name>
        <dbReference type="ChEBI" id="CHEBI:18420"/>
        <note>catalytic</note>
    </ligand>
</feature>
<feature type="binding site" evidence="1">
    <location>
        <position position="722"/>
    </location>
    <ligand>
        <name>Zn(2+)</name>
        <dbReference type="ChEBI" id="CHEBI:29105"/>
        <label>2</label>
    </ligand>
</feature>
<feature type="binding site" evidence="1">
    <location>
        <position position="725"/>
    </location>
    <ligand>
        <name>Zn(2+)</name>
        <dbReference type="ChEBI" id="CHEBI:29105"/>
        <label>2</label>
    </ligand>
</feature>
<feature type="binding site" evidence="1">
    <location>
        <position position="738"/>
    </location>
    <ligand>
        <name>Zn(2+)</name>
        <dbReference type="ChEBI" id="CHEBI:29105"/>
        <label>2</label>
    </ligand>
</feature>
<feature type="binding site" evidence="1">
    <location>
        <position position="741"/>
    </location>
    <ligand>
        <name>Zn(2+)</name>
        <dbReference type="ChEBI" id="CHEBI:29105"/>
        <label>2</label>
    </ligand>
</feature>
<feature type="binding site" evidence="1">
    <location>
        <position position="771"/>
    </location>
    <ligand>
        <name>Mg(2+)</name>
        <dbReference type="ChEBI" id="CHEBI:18420"/>
        <note>catalytic</note>
    </ligand>
</feature>
<feature type="sequence conflict" description="In Ref. 1; AAB49283." evidence="7" ref="1">
    <original>E</original>
    <variation>D</variation>
    <location>
        <position position="280"/>
    </location>
</feature>
<feature type="sequence conflict" description="In Ref. 1; AAB49283." evidence="7" ref="1">
    <original>A</original>
    <variation>P</variation>
    <location>
        <position position="937"/>
    </location>
</feature>
<protein>
    <recommendedName>
        <fullName evidence="1 6">Reverse gyrase</fullName>
        <ecNumber evidence="1">5.6.2.-</ecNumber>
    </recommendedName>
</protein>
<comment type="function">
    <text evidence="1 5">Modifies the topological state of DNA by introducing positive supercoils in an ATP-dependent process (PubMed:9045834). Increases the linking number in steps of +1. Binds to single-stranded DNA, transiently cleaves and then rejoins the ends, introducing a positive supercoil in the process. The scissile phosphodiester is attacked by the catalytic tyrosine of the enzyme, resulting in the formation of a DNA-(5'-phosphotyrosyl)-enzyme intermediate. Probably involved in rewinding DNA strands in regions of the chromosome that have opened up to allow replication, transcription, DNA repair and/or for DNA protection.</text>
</comment>
<comment type="catalytic activity">
    <reaction evidence="1">
        <text>ATP + H2O = ADP + phosphate + H(+)</text>
        <dbReference type="Rhea" id="RHEA:13065"/>
        <dbReference type="ChEBI" id="CHEBI:15377"/>
        <dbReference type="ChEBI" id="CHEBI:15378"/>
        <dbReference type="ChEBI" id="CHEBI:30616"/>
        <dbReference type="ChEBI" id="CHEBI:43474"/>
        <dbReference type="ChEBI" id="CHEBI:456216"/>
    </reaction>
</comment>
<comment type="cofactor">
    <cofactor evidence="1">
        <name>Zn(2+)</name>
        <dbReference type="ChEBI" id="CHEBI:29105"/>
    </cofactor>
    <text evidence="1">Binds 2 zinc ions per subunit.</text>
</comment>
<comment type="cofactor">
    <cofactor evidence="1">
        <name>Mg(2+)</name>
        <dbReference type="ChEBI" id="CHEBI:18420"/>
    </cofactor>
</comment>
<comment type="subunit">
    <text evidence="1 8">Monomer.</text>
</comment>
<comment type="subcellular location">
    <subcellularLocation>
        <location evidence="1">Cytoplasm</location>
    </subcellularLocation>
</comment>
<comment type="domain">
    <text evidence="1">Introduction of positive supercoils requires the cooperation of both domains. The helicase-like domain probably does not directly unwind DNA, but more likely acts by driving ATP-dependent conformational changes within the whole enzyme. A beta hairpin in the 'latch' region of the N-terminal domain plays a regulatory role in the enzyme, repressing topoisomerase activity in the absence of ATP and preventing the enzyme from acting as an ATP-independent relaxing enzyme; it also helps to coordinate nucleotide hydrolysis by the ATPase domain with the supercoiling activity of the topoisomerase domain.</text>
</comment>
<comment type="miscellaneous">
    <text evidence="1">This enzyme is the only unique feature of hyperthermophilic bacteria/archaea known and seems to be essential for adaptation to life at high temperatures. It may play a role in stabilization of DNA at high temperatures.</text>
</comment>
<comment type="similarity">
    <text evidence="1">In the N-terminal section; belongs to the DEAD box helicase family. DDVD subfamily.</text>
</comment>
<comment type="similarity">
    <text evidence="1">In the C-terminal section; belongs to the type IA topoisomerase family.</text>
</comment>
<proteinExistence type="evidence at protein level"/>
<organism>
    <name type="scientific">Pyrococcus furiosus (strain ATCC 43587 / DSM 3638 / JCM 8422 / Vc1)</name>
    <dbReference type="NCBI Taxonomy" id="186497"/>
    <lineage>
        <taxon>Archaea</taxon>
        <taxon>Methanobacteriati</taxon>
        <taxon>Methanobacteriota</taxon>
        <taxon>Thermococci</taxon>
        <taxon>Thermococcales</taxon>
        <taxon>Thermococcaceae</taxon>
        <taxon>Pyrococcus</taxon>
    </lineage>
</organism>
<keyword id="KW-0067">ATP-binding</keyword>
<keyword id="KW-0963">Cytoplasm</keyword>
<keyword id="KW-0238">DNA-binding</keyword>
<keyword id="KW-0413">Isomerase</keyword>
<keyword id="KW-0460">Magnesium</keyword>
<keyword id="KW-0479">Metal-binding</keyword>
<keyword id="KW-0547">Nucleotide-binding</keyword>
<keyword id="KW-1185">Reference proteome</keyword>
<keyword id="KW-0677">Repeat</keyword>
<keyword id="KW-0799">Topoisomerase</keyword>
<keyword id="KW-0862">Zinc</keyword>
<keyword id="KW-0863">Zinc-finger</keyword>
<accession>P95479</accession>
<accession>Q8U3H2</accession>